<dbReference type="EMBL" id="CP000034">
    <property type="protein sequence ID" value="ABB63591.1"/>
    <property type="molecule type" value="Genomic_DNA"/>
</dbReference>
<dbReference type="RefSeq" id="WP_000130621.1">
    <property type="nucleotide sequence ID" value="NC_007606.1"/>
</dbReference>
<dbReference type="RefSeq" id="YP_405082.1">
    <property type="nucleotide sequence ID" value="NC_007606.1"/>
</dbReference>
<dbReference type="SMR" id="Q32AR4"/>
<dbReference type="STRING" id="300267.SDY_3621"/>
<dbReference type="EnsemblBacteria" id="ABB63591">
    <property type="protein sequence ID" value="ABB63591"/>
    <property type="gene ID" value="SDY_3621"/>
</dbReference>
<dbReference type="GeneID" id="93778521"/>
<dbReference type="KEGG" id="sdy:SDY_3621"/>
<dbReference type="PATRIC" id="fig|300267.13.peg.4297"/>
<dbReference type="HOGENOM" id="CLU_165255_5_0_6"/>
<dbReference type="Proteomes" id="UP000002716">
    <property type="component" value="Chromosome"/>
</dbReference>
<dbReference type="GO" id="GO:0005737">
    <property type="term" value="C:cytoplasm"/>
    <property type="evidence" value="ECO:0007669"/>
    <property type="project" value="UniProtKB-SubCell"/>
</dbReference>
<dbReference type="GO" id="GO:0097163">
    <property type="term" value="F:sulfur carrier activity"/>
    <property type="evidence" value="ECO:0007669"/>
    <property type="project" value="UniProtKB-UniRule"/>
</dbReference>
<dbReference type="GO" id="GO:0002143">
    <property type="term" value="P:tRNA wobble position uridine thiolation"/>
    <property type="evidence" value="ECO:0007669"/>
    <property type="project" value="InterPro"/>
</dbReference>
<dbReference type="CDD" id="cd03423">
    <property type="entry name" value="SirA"/>
    <property type="match status" value="1"/>
</dbReference>
<dbReference type="FunFam" id="3.30.110.40:FF:000002">
    <property type="entry name" value="Sulfur carrier protein TusA"/>
    <property type="match status" value="1"/>
</dbReference>
<dbReference type="Gene3D" id="3.30.110.40">
    <property type="entry name" value="TusA-like domain"/>
    <property type="match status" value="1"/>
</dbReference>
<dbReference type="HAMAP" id="MF_00413">
    <property type="entry name" value="Thiourid_synth_A"/>
    <property type="match status" value="1"/>
</dbReference>
<dbReference type="InterPro" id="IPR022931">
    <property type="entry name" value="Sulphur_carrier_TusA"/>
</dbReference>
<dbReference type="InterPro" id="IPR001455">
    <property type="entry name" value="TusA-like"/>
</dbReference>
<dbReference type="InterPro" id="IPR036868">
    <property type="entry name" value="TusA-like_sf"/>
</dbReference>
<dbReference type="NCBIfam" id="NF001423">
    <property type="entry name" value="PRK00299.1"/>
    <property type="match status" value="1"/>
</dbReference>
<dbReference type="PANTHER" id="PTHR33279:SF2">
    <property type="entry name" value="SULFUR CARRIER PROTEIN TUSA"/>
    <property type="match status" value="1"/>
</dbReference>
<dbReference type="PANTHER" id="PTHR33279">
    <property type="entry name" value="SULFUR CARRIER PROTEIN YEDF-RELATED"/>
    <property type="match status" value="1"/>
</dbReference>
<dbReference type="Pfam" id="PF01206">
    <property type="entry name" value="TusA"/>
    <property type="match status" value="1"/>
</dbReference>
<dbReference type="SUPFAM" id="SSF64307">
    <property type="entry name" value="SirA-like"/>
    <property type="match status" value="1"/>
</dbReference>
<dbReference type="PROSITE" id="PS01148">
    <property type="entry name" value="UPF0033"/>
    <property type="match status" value="1"/>
</dbReference>
<name>TUSA_SHIDS</name>
<reference key="1">
    <citation type="journal article" date="2005" name="Nucleic Acids Res.">
        <title>Genome dynamics and diversity of Shigella species, the etiologic agents of bacillary dysentery.</title>
        <authorList>
            <person name="Yang F."/>
            <person name="Yang J."/>
            <person name="Zhang X."/>
            <person name="Chen L."/>
            <person name="Jiang Y."/>
            <person name="Yan Y."/>
            <person name="Tang X."/>
            <person name="Wang J."/>
            <person name="Xiong Z."/>
            <person name="Dong J."/>
            <person name="Xue Y."/>
            <person name="Zhu Y."/>
            <person name="Xu X."/>
            <person name="Sun L."/>
            <person name="Chen S."/>
            <person name="Nie H."/>
            <person name="Peng J."/>
            <person name="Xu J."/>
            <person name="Wang Y."/>
            <person name="Yuan Z."/>
            <person name="Wen Y."/>
            <person name="Yao Z."/>
            <person name="Shen Y."/>
            <person name="Qiang B."/>
            <person name="Hou Y."/>
            <person name="Yu J."/>
            <person name="Jin Q."/>
        </authorList>
    </citation>
    <scope>NUCLEOTIDE SEQUENCE [LARGE SCALE GENOMIC DNA]</scope>
    <source>
        <strain>Sd197</strain>
    </source>
</reference>
<organism>
    <name type="scientific">Shigella dysenteriae serotype 1 (strain Sd197)</name>
    <dbReference type="NCBI Taxonomy" id="300267"/>
    <lineage>
        <taxon>Bacteria</taxon>
        <taxon>Pseudomonadati</taxon>
        <taxon>Pseudomonadota</taxon>
        <taxon>Gammaproteobacteria</taxon>
        <taxon>Enterobacterales</taxon>
        <taxon>Enterobacteriaceae</taxon>
        <taxon>Shigella</taxon>
    </lineage>
</organism>
<protein>
    <recommendedName>
        <fullName evidence="1">Sulfur carrier protein TusA</fullName>
    </recommendedName>
    <alternativeName>
        <fullName evidence="1">Sulfur mediator TusA</fullName>
    </alternativeName>
    <alternativeName>
        <fullName evidence="1">Sulfur transfer protein TusA</fullName>
    </alternativeName>
    <alternativeName>
        <fullName evidence="1">tRNA 2-thiouridine synthesizing protein A</fullName>
    </alternativeName>
</protein>
<proteinExistence type="inferred from homology"/>
<keyword id="KW-0963">Cytoplasm</keyword>
<keyword id="KW-1185">Reference proteome</keyword>
<keyword id="KW-0819">tRNA processing</keyword>
<comment type="function">
    <text evidence="1">Sulfur carrier protein involved in sulfur trafficking in the cell. Part of a sulfur-relay system required for 2-thiolation during synthesis of 2-thiouridine of the modified wobble base 5-methylaminomethyl-2-thiouridine (mnm(5)s(2)U) in tRNA. Interacts with IscS and stimulates its cysteine desulfurase activity. Accepts an activated sulfur from IscS, which is then transferred to TusD, and thus determines the direction of sulfur flow from IscS to 2-thiouridine formation. Also appears to be involved in sulfur transfer for the biosynthesis of molybdopterin.</text>
</comment>
<comment type="pathway">
    <text evidence="1">tRNA modification.</text>
</comment>
<comment type="subunit">
    <text evidence="1">Interacts with IscS.</text>
</comment>
<comment type="subcellular location">
    <subcellularLocation>
        <location evidence="1">Cytoplasm</location>
    </subcellularLocation>
</comment>
<comment type="similarity">
    <text evidence="1">Belongs to the sulfur carrier protein TusA family.</text>
</comment>
<sequence length="81" mass="9095">MTDLFSSPDHTLDALGLRCPEPVMMVRKTVRNMQPGETLLIIADDPATTRDIPGFCTFMEHELVAKETDGLPYRYLIRKGG</sequence>
<evidence type="ECO:0000255" key="1">
    <source>
        <dbReference type="HAMAP-Rule" id="MF_00413"/>
    </source>
</evidence>
<accession>Q32AR4</accession>
<feature type="chain" id="PRO_0000234125" description="Sulfur carrier protein TusA">
    <location>
        <begin position="1"/>
        <end position="81"/>
    </location>
</feature>
<feature type="active site" description="Cysteine persulfide intermediate" evidence="1">
    <location>
        <position position="19"/>
    </location>
</feature>
<gene>
    <name evidence="1" type="primary">tusA</name>
    <name type="ordered locus">SDY_3621</name>
</gene>